<dbReference type="EMBL" id="CH480816">
    <property type="protein sequence ID" value="EDW48309.1"/>
    <property type="molecule type" value="Genomic_DNA"/>
</dbReference>
<dbReference type="SMR" id="B4HMV9"/>
<dbReference type="STRING" id="7238.B4HMV9"/>
<dbReference type="EnsemblMetazoa" id="FBtr0204778">
    <property type="protein sequence ID" value="FBpp0203270"/>
    <property type="gene ID" value="FBgn0176671"/>
</dbReference>
<dbReference type="EnsemblMetazoa" id="XM_002034260.2">
    <property type="protein sequence ID" value="XP_002034296.1"/>
    <property type="gene ID" value="LOC6609619"/>
</dbReference>
<dbReference type="GeneID" id="6609619"/>
<dbReference type="KEGG" id="dse:6609619"/>
<dbReference type="CTD" id="8662"/>
<dbReference type="HOGENOM" id="CLU_011152_1_0_1"/>
<dbReference type="OMA" id="LWGGPQF"/>
<dbReference type="OrthoDB" id="15094at7215"/>
<dbReference type="PhylomeDB" id="B4HMV9"/>
<dbReference type="Proteomes" id="UP000001292">
    <property type="component" value="Unassembled WGS sequence"/>
</dbReference>
<dbReference type="GO" id="GO:0016282">
    <property type="term" value="C:eukaryotic 43S preinitiation complex"/>
    <property type="evidence" value="ECO:0007669"/>
    <property type="project" value="UniProtKB-UniRule"/>
</dbReference>
<dbReference type="GO" id="GO:0033290">
    <property type="term" value="C:eukaryotic 48S preinitiation complex"/>
    <property type="evidence" value="ECO:0007669"/>
    <property type="project" value="UniProtKB-UniRule"/>
</dbReference>
<dbReference type="GO" id="GO:0005852">
    <property type="term" value="C:eukaryotic translation initiation factor 3 complex"/>
    <property type="evidence" value="ECO:0000250"/>
    <property type="project" value="UniProtKB"/>
</dbReference>
<dbReference type="GO" id="GO:0003723">
    <property type="term" value="F:RNA binding"/>
    <property type="evidence" value="ECO:0007669"/>
    <property type="project" value="UniProtKB-UniRule"/>
</dbReference>
<dbReference type="GO" id="GO:0003743">
    <property type="term" value="F:translation initiation factor activity"/>
    <property type="evidence" value="ECO:0000250"/>
    <property type="project" value="UniProtKB"/>
</dbReference>
<dbReference type="GO" id="GO:0031369">
    <property type="term" value="F:translation initiation factor binding"/>
    <property type="evidence" value="ECO:0007669"/>
    <property type="project" value="InterPro"/>
</dbReference>
<dbReference type="GO" id="GO:0030707">
    <property type="term" value="P:follicle cell of egg chamber development"/>
    <property type="evidence" value="ECO:0007669"/>
    <property type="project" value="EnsemblMetazoa"/>
</dbReference>
<dbReference type="GO" id="GO:0001732">
    <property type="term" value="P:formation of cytoplasmic translation initiation complex"/>
    <property type="evidence" value="ECO:0007669"/>
    <property type="project" value="UniProtKB-UniRule"/>
</dbReference>
<dbReference type="GO" id="GO:0006446">
    <property type="term" value="P:regulation of translational initiation"/>
    <property type="evidence" value="ECO:0000250"/>
    <property type="project" value="UniProtKB"/>
</dbReference>
<dbReference type="CDD" id="cd12278">
    <property type="entry name" value="RRM_eIF3B"/>
    <property type="match status" value="1"/>
</dbReference>
<dbReference type="FunFam" id="2.130.10.10:FF:000884">
    <property type="entry name" value="Eukaryotic translation initiation factor 3 subunit B"/>
    <property type="match status" value="1"/>
</dbReference>
<dbReference type="FunFam" id="3.30.70.330:FF:000607">
    <property type="entry name" value="Eukaryotic translation initiation factor 3 subunit B"/>
    <property type="match status" value="1"/>
</dbReference>
<dbReference type="Gene3D" id="3.30.70.330">
    <property type="match status" value="1"/>
</dbReference>
<dbReference type="Gene3D" id="2.130.10.10">
    <property type="entry name" value="YVTN repeat-like/Quinoprotein amine dehydrogenase"/>
    <property type="match status" value="1"/>
</dbReference>
<dbReference type="HAMAP" id="MF_03001">
    <property type="entry name" value="eIF3b"/>
    <property type="match status" value="1"/>
</dbReference>
<dbReference type="InterPro" id="IPR011400">
    <property type="entry name" value="EIF3B"/>
</dbReference>
<dbReference type="InterPro" id="IPR034363">
    <property type="entry name" value="eIF3B_RRM"/>
</dbReference>
<dbReference type="InterPro" id="IPR012677">
    <property type="entry name" value="Nucleotide-bd_a/b_plait_sf"/>
</dbReference>
<dbReference type="InterPro" id="IPR035979">
    <property type="entry name" value="RBD_domain_sf"/>
</dbReference>
<dbReference type="InterPro" id="IPR000504">
    <property type="entry name" value="RRM_dom"/>
</dbReference>
<dbReference type="InterPro" id="IPR013979">
    <property type="entry name" value="TIF_beta_prop-like"/>
</dbReference>
<dbReference type="InterPro" id="IPR015943">
    <property type="entry name" value="WD40/YVTN_repeat-like_dom_sf"/>
</dbReference>
<dbReference type="PANTHER" id="PTHR14068">
    <property type="entry name" value="EUKARYOTIC TRANSLATION INITIATION FACTOR 3 EIF3 -RELATED"/>
    <property type="match status" value="1"/>
</dbReference>
<dbReference type="PANTHER" id="PTHR14068:SF0">
    <property type="entry name" value="EUKARYOTIC TRANSLATION INITIATION FACTOR 3 SUBUNIT B"/>
    <property type="match status" value="1"/>
</dbReference>
<dbReference type="Pfam" id="PF08662">
    <property type="entry name" value="eIF2A"/>
    <property type="match status" value="1"/>
</dbReference>
<dbReference type="Pfam" id="PF00076">
    <property type="entry name" value="RRM_1"/>
    <property type="match status" value="1"/>
</dbReference>
<dbReference type="PIRSF" id="PIRSF036424">
    <property type="entry name" value="eIF3b"/>
    <property type="match status" value="1"/>
</dbReference>
<dbReference type="SMART" id="SM00360">
    <property type="entry name" value="RRM"/>
    <property type="match status" value="1"/>
</dbReference>
<dbReference type="SUPFAM" id="SSF82171">
    <property type="entry name" value="DPP6 N-terminal domain-like"/>
    <property type="match status" value="1"/>
</dbReference>
<dbReference type="SUPFAM" id="SSF54928">
    <property type="entry name" value="RNA-binding domain, RBD"/>
    <property type="match status" value="1"/>
</dbReference>
<dbReference type="PROSITE" id="PS50102">
    <property type="entry name" value="RRM"/>
    <property type="match status" value="1"/>
</dbReference>
<protein>
    <recommendedName>
        <fullName evidence="2">Eukaryotic translation initiation factor 3 subunit B</fullName>
        <shortName evidence="2">eIF3b</shortName>
    </recommendedName>
    <alternativeName>
        <fullName evidence="2">Eukaryotic translation initiation factor 3 subunit 9</fullName>
    </alternativeName>
</protein>
<sequence>MAKKKSEEQSSADANDSDYQEEPNFEDPPGFVDNISDEDLLGDMLAQRPSEADGVESVVVVDNIPKVEPVRLEKLKSVINKLFSNYGDIVNVVYPVDEEGKTKGYAFMEYKQASQAEEAVKKLNNHRLDKNHTFAVNLFTDFQKYENIPEKWEPPTVQTFKVQSDLYNFINDPDTYDQYCVAAETAPNCVQVGFWQNVLPEPFELETRERFTDTFVKWSPLGTYVVTFHKPGVAIWGGSSFQKIQKFPHPGTQFVEFSPCENYLVTYGPTPTGQKIIIWDIRTGAEKRSFVADGMSVLSMFRWSHDDKFVARMGENSIHIYETPSFYLLDLKSIKIPGIRGFSWSPTDNVIAYWVEEQNQIPARVTLMEIPKKREIRNKNLFHVADCKLHWQKSGDYLCVKVDRYSKLKKDKKDLDVKFLGMFYNFEIFHMREKEIPVDSVEIRELILAFAWEPIGNKFSIIHGETNSSNVSFYEVNKGVKPSLVKRLEKKSCTHLFWSPRGQFIVMANLTMGTFEFVDSTNDYIITSSPDHFRASEVEWDPTGRYVVTGVSSWKVKEDTGFNMYTFQGRIIKRTILKNFVQFLWRPRPPTLLSEEKQKEIKKNLKKYYAAFEQKDRLRLTRASKELLEKRSQLRETFMEYRNKRIAEWADQKSRRIMLRGHVDTDNLETDEVDEEIVEFLVKEEVTLLE</sequence>
<comment type="function">
    <text evidence="2">RNA-binding component of the eukaryotic translation initiation factor 3 (eIF-3) complex, which is involved in protein synthesis of a specialized repertoire of mRNAs and, together with other initiation factors, stimulates binding of mRNA and methionyl-tRNAi to the 40S ribosome. The eIF-3 complex specifically targets and initiates translation of a subset of mRNAs involved in cell proliferation.</text>
</comment>
<comment type="subunit">
    <text evidence="1 2">Component of the eukaryotic translation initiation factor 3 (eIF-3) complex. The eIF-3 complex interacts with pix. Interacts with mxt (By similarity).</text>
</comment>
<comment type="subcellular location">
    <subcellularLocation>
        <location evidence="2">Cytoplasm</location>
    </subcellularLocation>
</comment>
<comment type="similarity">
    <text evidence="2">Belongs to the eIF-3 subunit B family.</text>
</comment>
<accession>B4HMV9</accession>
<proteinExistence type="inferred from homology"/>
<gene>
    <name evidence="2" type="primary">eIF3b</name>
    <name evidence="2" type="synonym">eIF3-S9</name>
    <name type="ORF">GM21793</name>
</gene>
<name>EIF3B_DROSE</name>
<evidence type="ECO:0000250" key="1">
    <source>
        <dbReference type="UniProtKB" id="Q0E940"/>
    </source>
</evidence>
<evidence type="ECO:0000255" key="2">
    <source>
        <dbReference type="HAMAP-Rule" id="MF_03001"/>
    </source>
</evidence>
<evidence type="ECO:0000256" key="3">
    <source>
        <dbReference type="SAM" id="MobiDB-lite"/>
    </source>
</evidence>
<organism>
    <name type="scientific">Drosophila sechellia</name>
    <name type="common">Fruit fly</name>
    <dbReference type="NCBI Taxonomy" id="7238"/>
    <lineage>
        <taxon>Eukaryota</taxon>
        <taxon>Metazoa</taxon>
        <taxon>Ecdysozoa</taxon>
        <taxon>Arthropoda</taxon>
        <taxon>Hexapoda</taxon>
        <taxon>Insecta</taxon>
        <taxon>Pterygota</taxon>
        <taxon>Neoptera</taxon>
        <taxon>Endopterygota</taxon>
        <taxon>Diptera</taxon>
        <taxon>Brachycera</taxon>
        <taxon>Muscomorpha</taxon>
        <taxon>Ephydroidea</taxon>
        <taxon>Drosophilidae</taxon>
        <taxon>Drosophila</taxon>
        <taxon>Sophophora</taxon>
    </lineage>
</organism>
<feature type="chain" id="PRO_0000363801" description="Eukaryotic translation initiation factor 3 subunit B">
    <location>
        <begin position="1"/>
        <end position="690"/>
    </location>
</feature>
<feature type="domain" description="RRM" evidence="2">
    <location>
        <begin position="57"/>
        <end position="141"/>
    </location>
</feature>
<feature type="repeat" description="WD 1">
    <location>
        <begin position="207"/>
        <end position="246"/>
    </location>
</feature>
<feature type="repeat" description="WD 2">
    <location>
        <begin position="293"/>
        <end position="331"/>
    </location>
</feature>
<feature type="repeat" description="WD 3">
    <location>
        <begin position="334"/>
        <end position="369"/>
    </location>
</feature>
<feature type="repeat" description="WD 4">
    <location>
        <begin position="442"/>
        <end position="484"/>
    </location>
</feature>
<feature type="repeat" description="WD 5">
    <location>
        <begin position="530"/>
        <end position="575"/>
    </location>
</feature>
<feature type="region of interest" description="Disordered" evidence="3">
    <location>
        <begin position="1"/>
        <end position="37"/>
    </location>
</feature>
<feature type="coiled-coil region" evidence="2">
    <location>
        <begin position="595"/>
        <end position="645"/>
    </location>
</feature>
<feature type="compositionally biased region" description="Acidic residues" evidence="3">
    <location>
        <begin position="15"/>
        <end position="25"/>
    </location>
</feature>
<reference key="1">
    <citation type="journal article" date="2007" name="Nature">
        <title>Evolution of genes and genomes on the Drosophila phylogeny.</title>
        <authorList>
            <consortium name="Drosophila 12 genomes consortium"/>
        </authorList>
    </citation>
    <scope>NUCLEOTIDE SEQUENCE [LARGE SCALE GENOMIC DNA]</scope>
    <source>
        <strain>Rob3c / Tucson 14021-0248.25</strain>
    </source>
</reference>
<keyword id="KW-0175">Coiled coil</keyword>
<keyword id="KW-0963">Cytoplasm</keyword>
<keyword id="KW-0396">Initiation factor</keyword>
<keyword id="KW-0648">Protein biosynthesis</keyword>
<keyword id="KW-1185">Reference proteome</keyword>
<keyword id="KW-0677">Repeat</keyword>
<keyword id="KW-0694">RNA-binding</keyword>
<keyword id="KW-0853">WD repeat</keyword>